<proteinExistence type="inferred from homology"/>
<dbReference type="EC" id="3.5.1.96" evidence="1"/>
<dbReference type="EMBL" id="CP000026">
    <property type="protein sequence ID" value="AAV77470.1"/>
    <property type="molecule type" value="Genomic_DNA"/>
</dbReference>
<dbReference type="RefSeq" id="WP_000368463.1">
    <property type="nucleotide sequence ID" value="NC_006511.1"/>
</dbReference>
<dbReference type="SMR" id="Q5PHC2"/>
<dbReference type="KEGG" id="spt:SPA1537"/>
<dbReference type="HOGENOM" id="CLU_071608_0_0_6"/>
<dbReference type="UniPathway" id="UPA00185">
    <property type="reaction ID" value="UER00283"/>
</dbReference>
<dbReference type="Proteomes" id="UP000008185">
    <property type="component" value="Chromosome"/>
</dbReference>
<dbReference type="GO" id="GO:0016788">
    <property type="term" value="F:hydrolase activity, acting on ester bonds"/>
    <property type="evidence" value="ECO:0007669"/>
    <property type="project" value="UniProtKB-UniRule"/>
</dbReference>
<dbReference type="GO" id="GO:0009017">
    <property type="term" value="F:succinylglutamate desuccinylase activity"/>
    <property type="evidence" value="ECO:0007669"/>
    <property type="project" value="UniProtKB-EC"/>
</dbReference>
<dbReference type="GO" id="GO:0008270">
    <property type="term" value="F:zinc ion binding"/>
    <property type="evidence" value="ECO:0007669"/>
    <property type="project" value="UniProtKB-UniRule"/>
</dbReference>
<dbReference type="GO" id="GO:0019544">
    <property type="term" value="P:arginine catabolic process to glutamate"/>
    <property type="evidence" value="ECO:0007669"/>
    <property type="project" value="UniProtKB-UniRule"/>
</dbReference>
<dbReference type="GO" id="GO:0019545">
    <property type="term" value="P:arginine catabolic process to succinate"/>
    <property type="evidence" value="ECO:0007669"/>
    <property type="project" value="UniProtKB-UniRule"/>
</dbReference>
<dbReference type="CDD" id="cd03855">
    <property type="entry name" value="M14_ASTE"/>
    <property type="match status" value="1"/>
</dbReference>
<dbReference type="FunFam" id="3.40.630.10:FF:000017">
    <property type="entry name" value="Succinylglutamate desuccinylase"/>
    <property type="match status" value="1"/>
</dbReference>
<dbReference type="Gene3D" id="3.40.630.10">
    <property type="entry name" value="Zn peptidases"/>
    <property type="match status" value="1"/>
</dbReference>
<dbReference type="HAMAP" id="MF_00767">
    <property type="entry name" value="Arg_catab_AstE"/>
    <property type="match status" value="1"/>
</dbReference>
<dbReference type="InterPro" id="IPR050178">
    <property type="entry name" value="AspA/AstE_fam"/>
</dbReference>
<dbReference type="InterPro" id="IPR055438">
    <property type="entry name" value="AstE_AspA_cat"/>
</dbReference>
<dbReference type="InterPro" id="IPR007036">
    <property type="entry name" value="Aste_AspA_hybrid_dom"/>
</dbReference>
<dbReference type="InterPro" id="IPR016681">
    <property type="entry name" value="SuccinylGlu_desuccinylase"/>
</dbReference>
<dbReference type="NCBIfam" id="TIGR03242">
    <property type="entry name" value="arg_catab_astE"/>
    <property type="match status" value="1"/>
</dbReference>
<dbReference type="NCBIfam" id="NF003706">
    <property type="entry name" value="PRK05324.1"/>
    <property type="match status" value="1"/>
</dbReference>
<dbReference type="PANTHER" id="PTHR15162">
    <property type="entry name" value="ASPARTOACYLASE"/>
    <property type="match status" value="1"/>
</dbReference>
<dbReference type="PANTHER" id="PTHR15162:SF7">
    <property type="entry name" value="SUCCINYLGLUTAMATE DESUCCINYLASE"/>
    <property type="match status" value="1"/>
</dbReference>
<dbReference type="Pfam" id="PF24827">
    <property type="entry name" value="AstE_AspA_cat"/>
    <property type="match status" value="1"/>
</dbReference>
<dbReference type="Pfam" id="PF04952">
    <property type="entry name" value="AstE_AspA_hybrid"/>
    <property type="match status" value="1"/>
</dbReference>
<dbReference type="PIRSF" id="PIRSF017020">
    <property type="entry name" value="AstE"/>
    <property type="match status" value="1"/>
</dbReference>
<dbReference type="SUPFAM" id="SSF53187">
    <property type="entry name" value="Zn-dependent exopeptidases"/>
    <property type="match status" value="1"/>
</dbReference>
<evidence type="ECO:0000255" key="1">
    <source>
        <dbReference type="HAMAP-Rule" id="MF_00767"/>
    </source>
</evidence>
<gene>
    <name evidence="1" type="primary">astE</name>
    <name type="ordered locus">SPA1537</name>
</gene>
<feature type="chain" id="PRO_0000257720" description="Succinylglutamate desuccinylase">
    <location>
        <begin position="1"/>
        <end position="322"/>
    </location>
</feature>
<feature type="active site" evidence="1">
    <location>
        <position position="210"/>
    </location>
</feature>
<feature type="binding site" evidence="1">
    <location>
        <position position="53"/>
    </location>
    <ligand>
        <name>Zn(2+)</name>
        <dbReference type="ChEBI" id="CHEBI:29105"/>
    </ligand>
</feature>
<feature type="binding site" evidence="1">
    <location>
        <position position="56"/>
    </location>
    <ligand>
        <name>Zn(2+)</name>
        <dbReference type="ChEBI" id="CHEBI:29105"/>
    </ligand>
</feature>
<feature type="binding site" evidence="1">
    <location>
        <position position="147"/>
    </location>
    <ligand>
        <name>Zn(2+)</name>
        <dbReference type="ChEBI" id="CHEBI:29105"/>
    </ligand>
</feature>
<name>ASTE_SALPA</name>
<accession>Q5PHC2</accession>
<sequence>MDNFLALTLSGTTPRVTQGKGAGFRWRWLSHGLLELTPDAPVDRALILSAGIHGNETAPVEMLDKLLSALYSGSLTLTWRVLVVLGNPQALAAGIRYCHSDMNRMFGGRWQSFAESDETRRARELELSLETFFSSGQARVRWHLDLHTAIRGSHHLRFGVLPQRDRPWETGFLAWLGAAGLEALVFHQAPGGTFTHFSSEHFGALSCTLELGKALPFGQNDLTQFSVTSQALSALLSGVETSTSSSPPLRYRVVSQITRHSDKFALYMDAQTLNFTAFAKGTLLAEEGDKRVTVTHDVEYVLFPNPSVACGLRAGLMLERLP</sequence>
<reference key="1">
    <citation type="journal article" date="2004" name="Nat. Genet.">
        <title>Comparison of genome degradation in Paratyphi A and Typhi, human-restricted serovars of Salmonella enterica that cause typhoid.</title>
        <authorList>
            <person name="McClelland M."/>
            <person name="Sanderson K.E."/>
            <person name="Clifton S.W."/>
            <person name="Latreille P."/>
            <person name="Porwollik S."/>
            <person name="Sabo A."/>
            <person name="Meyer R."/>
            <person name="Bieri T."/>
            <person name="Ozersky P."/>
            <person name="McLellan M."/>
            <person name="Harkins C.R."/>
            <person name="Wang C."/>
            <person name="Nguyen C."/>
            <person name="Berghoff A."/>
            <person name="Elliott G."/>
            <person name="Kohlberg S."/>
            <person name="Strong C."/>
            <person name="Du F."/>
            <person name="Carter J."/>
            <person name="Kremizki C."/>
            <person name="Layman D."/>
            <person name="Leonard S."/>
            <person name="Sun H."/>
            <person name="Fulton L."/>
            <person name="Nash W."/>
            <person name="Miner T."/>
            <person name="Minx P."/>
            <person name="Delehaunty K."/>
            <person name="Fronick C."/>
            <person name="Magrini V."/>
            <person name="Nhan M."/>
            <person name="Warren W."/>
            <person name="Florea L."/>
            <person name="Spieth J."/>
            <person name="Wilson R.K."/>
        </authorList>
    </citation>
    <scope>NUCLEOTIDE SEQUENCE [LARGE SCALE GENOMIC DNA]</scope>
    <source>
        <strain>ATCC 9150 / SARB42</strain>
    </source>
</reference>
<organism>
    <name type="scientific">Salmonella paratyphi A (strain ATCC 9150 / SARB42)</name>
    <dbReference type="NCBI Taxonomy" id="295319"/>
    <lineage>
        <taxon>Bacteria</taxon>
        <taxon>Pseudomonadati</taxon>
        <taxon>Pseudomonadota</taxon>
        <taxon>Gammaproteobacteria</taxon>
        <taxon>Enterobacterales</taxon>
        <taxon>Enterobacteriaceae</taxon>
        <taxon>Salmonella</taxon>
    </lineage>
</organism>
<comment type="function">
    <text evidence="1">Transforms N(2)-succinylglutamate into succinate and glutamate.</text>
</comment>
<comment type="catalytic activity">
    <reaction evidence="1">
        <text>N-succinyl-L-glutamate + H2O = L-glutamate + succinate</text>
        <dbReference type="Rhea" id="RHEA:15169"/>
        <dbReference type="ChEBI" id="CHEBI:15377"/>
        <dbReference type="ChEBI" id="CHEBI:29985"/>
        <dbReference type="ChEBI" id="CHEBI:30031"/>
        <dbReference type="ChEBI" id="CHEBI:58763"/>
        <dbReference type="EC" id="3.5.1.96"/>
    </reaction>
</comment>
<comment type="cofactor">
    <cofactor evidence="1">
        <name>Zn(2+)</name>
        <dbReference type="ChEBI" id="CHEBI:29105"/>
    </cofactor>
    <text evidence="1">Binds 1 zinc ion per subunit.</text>
</comment>
<comment type="pathway">
    <text evidence="1">Amino-acid degradation; L-arginine degradation via AST pathway; L-glutamate and succinate from L-arginine: step 5/5.</text>
</comment>
<comment type="similarity">
    <text evidence="1">Belongs to the AspA/AstE family. Succinylglutamate desuccinylase subfamily.</text>
</comment>
<keyword id="KW-0056">Arginine metabolism</keyword>
<keyword id="KW-0378">Hydrolase</keyword>
<keyword id="KW-0479">Metal-binding</keyword>
<keyword id="KW-0862">Zinc</keyword>
<protein>
    <recommendedName>
        <fullName evidence="1">Succinylglutamate desuccinylase</fullName>
        <ecNumber evidence="1">3.5.1.96</ecNumber>
    </recommendedName>
</protein>